<evidence type="ECO:0000255" key="1">
    <source>
        <dbReference type="HAMAP-Rule" id="MF_00116"/>
    </source>
</evidence>
<protein>
    <recommendedName>
        <fullName evidence="1">Deoxyuridine 5'-triphosphate nucleotidohydrolase</fullName>
        <shortName evidence="1">dUTPase</shortName>
        <ecNumber evidence="1">3.6.1.23</ecNumber>
    </recommendedName>
    <alternativeName>
        <fullName evidence="1">dUTP pyrophosphatase</fullName>
    </alternativeName>
</protein>
<comment type="function">
    <text evidence="1">This enzyme is involved in nucleotide metabolism: it produces dUMP, the immediate precursor of thymidine nucleotides and it decreases the intracellular concentration of dUTP so that uracil cannot be incorporated into DNA.</text>
</comment>
<comment type="catalytic activity">
    <reaction evidence="1">
        <text>dUTP + H2O = dUMP + diphosphate + H(+)</text>
        <dbReference type="Rhea" id="RHEA:10248"/>
        <dbReference type="ChEBI" id="CHEBI:15377"/>
        <dbReference type="ChEBI" id="CHEBI:15378"/>
        <dbReference type="ChEBI" id="CHEBI:33019"/>
        <dbReference type="ChEBI" id="CHEBI:61555"/>
        <dbReference type="ChEBI" id="CHEBI:246422"/>
        <dbReference type="EC" id="3.6.1.23"/>
    </reaction>
</comment>
<comment type="cofactor">
    <cofactor evidence="1">
        <name>Mg(2+)</name>
        <dbReference type="ChEBI" id="CHEBI:18420"/>
    </cofactor>
</comment>
<comment type="pathway">
    <text evidence="1">Pyrimidine metabolism; dUMP biosynthesis; dUMP from dCTP (dUTP route): step 2/2.</text>
</comment>
<comment type="similarity">
    <text evidence="1">Belongs to the dUTPase family.</text>
</comment>
<gene>
    <name evidence="1" type="primary">dut</name>
    <name type="ordered locus">BL1438</name>
</gene>
<reference key="1">
    <citation type="journal article" date="2002" name="Proc. Natl. Acad. Sci. U.S.A.">
        <title>The genome sequence of Bifidobacterium longum reflects its adaptation to the human gastrointestinal tract.</title>
        <authorList>
            <person name="Schell M.A."/>
            <person name="Karmirantzou M."/>
            <person name="Snel B."/>
            <person name="Vilanova D."/>
            <person name="Berger B."/>
            <person name="Pessi G."/>
            <person name="Zwahlen M.-C."/>
            <person name="Desiere F."/>
            <person name="Bork P."/>
            <person name="Delley M."/>
            <person name="Pridmore R.D."/>
            <person name="Arigoni F."/>
        </authorList>
    </citation>
    <scope>NUCLEOTIDE SEQUENCE [LARGE SCALE GENOMIC DNA]</scope>
    <source>
        <strain>NCC 2705</strain>
    </source>
</reference>
<sequence length="158" mass="16747">MAFDETYNEPESTEVLVKSLDPEHPAQLHYAHAGDAGADLITTVDVTLKPFERALVPTGVAIALPAGYVALVHPRSGLAAKQGVTVLNAPGTVDAGYRGEIKVPLINLDPKHTAVFHPGDRIAQLVIQRYVEARFIPAETLPGSDRAERGFGSTGVAS</sequence>
<keyword id="KW-0378">Hydrolase</keyword>
<keyword id="KW-0460">Magnesium</keyword>
<keyword id="KW-0479">Metal-binding</keyword>
<keyword id="KW-0546">Nucleotide metabolism</keyword>
<keyword id="KW-1185">Reference proteome</keyword>
<name>DUT_BIFLO</name>
<organism>
    <name type="scientific">Bifidobacterium longum (strain NCC 2705)</name>
    <dbReference type="NCBI Taxonomy" id="206672"/>
    <lineage>
        <taxon>Bacteria</taxon>
        <taxon>Bacillati</taxon>
        <taxon>Actinomycetota</taxon>
        <taxon>Actinomycetes</taxon>
        <taxon>Bifidobacteriales</taxon>
        <taxon>Bifidobacteriaceae</taxon>
        <taxon>Bifidobacterium</taxon>
    </lineage>
</organism>
<proteinExistence type="inferred from homology"/>
<dbReference type="EC" id="3.6.1.23" evidence="1"/>
<dbReference type="EMBL" id="AE014295">
    <property type="protein sequence ID" value="AAN25235.1"/>
    <property type="molecule type" value="Genomic_DNA"/>
</dbReference>
<dbReference type="RefSeq" id="NP_696599.1">
    <property type="nucleotide sequence ID" value="NC_004307.2"/>
</dbReference>
<dbReference type="RefSeq" id="WP_007055963.1">
    <property type="nucleotide sequence ID" value="NC_004307.2"/>
</dbReference>
<dbReference type="SMR" id="Q8G4E8"/>
<dbReference type="STRING" id="206672.BL1438"/>
<dbReference type="EnsemblBacteria" id="AAN25235">
    <property type="protein sequence ID" value="AAN25235"/>
    <property type="gene ID" value="BL1438"/>
</dbReference>
<dbReference type="GeneID" id="69578389"/>
<dbReference type="KEGG" id="blo:BL1438"/>
<dbReference type="PATRIC" id="fig|206672.9.peg.296"/>
<dbReference type="HOGENOM" id="CLU_068508_1_3_11"/>
<dbReference type="OrthoDB" id="9809956at2"/>
<dbReference type="PhylomeDB" id="Q8G4E8"/>
<dbReference type="UniPathway" id="UPA00610">
    <property type="reaction ID" value="UER00666"/>
</dbReference>
<dbReference type="Proteomes" id="UP000000439">
    <property type="component" value="Chromosome"/>
</dbReference>
<dbReference type="GO" id="GO:0004170">
    <property type="term" value="F:dUTP diphosphatase activity"/>
    <property type="evidence" value="ECO:0007669"/>
    <property type="project" value="UniProtKB-UniRule"/>
</dbReference>
<dbReference type="GO" id="GO:0000287">
    <property type="term" value="F:magnesium ion binding"/>
    <property type="evidence" value="ECO:0007669"/>
    <property type="project" value="UniProtKB-UniRule"/>
</dbReference>
<dbReference type="GO" id="GO:0006226">
    <property type="term" value="P:dUMP biosynthetic process"/>
    <property type="evidence" value="ECO:0007669"/>
    <property type="project" value="UniProtKB-UniRule"/>
</dbReference>
<dbReference type="GO" id="GO:0046081">
    <property type="term" value="P:dUTP catabolic process"/>
    <property type="evidence" value="ECO:0007669"/>
    <property type="project" value="InterPro"/>
</dbReference>
<dbReference type="CDD" id="cd07557">
    <property type="entry name" value="trimeric_dUTPase"/>
    <property type="match status" value="1"/>
</dbReference>
<dbReference type="FunFam" id="2.70.40.10:FF:000008">
    <property type="entry name" value="Deoxyuridine 5'-triphosphate nucleotidohydrolase"/>
    <property type="match status" value="1"/>
</dbReference>
<dbReference type="Gene3D" id="2.70.40.10">
    <property type="match status" value="1"/>
</dbReference>
<dbReference type="HAMAP" id="MF_00116">
    <property type="entry name" value="dUTPase_bact"/>
    <property type="match status" value="1"/>
</dbReference>
<dbReference type="InterPro" id="IPR008181">
    <property type="entry name" value="dUTPase"/>
</dbReference>
<dbReference type="InterPro" id="IPR029054">
    <property type="entry name" value="dUTPase-like"/>
</dbReference>
<dbReference type="InterPro" id="IPR036157">
    <property type="entry name" value="dUTPase-like_sf"/>
</dbReference>
<dbReference type="InterPro" id="IPR033704">
    <property type="entry name" value="dUTPase_trimeric"/>
</dbReference>
<dbReference type="NCBIfam" id="TIGR00576">
    <property type="entry name" value="dut"/>
    <property type="match status" value="1"/>
</dbReference>
<dbReference type="NCBIfam" id="NF001862">
    <property type="entry name" value="PRK00601.1"/>
    <property type="match status" value="1"/>
</dbReference>
<dbReference type="PANTHER" id="PTHR11241">
    <property type="entry name" value="DEOXYURIDINE 5'-TRIPHOSPHATE NUCLEOTIDOHYDROLASE"/>
    <property type="match status" value="1"/>
</dbReference>
<dbReference type="PANTHER" id="PTHR11241:SF0">
    <property type="entry name" value="DEOXYURIDINE 5'-TRIPHOSPHATE NUCLEOTIDOHYDROLASE"/>
    <property type="match status" value="1"/>
</dbReference>
<dbReference type="Pfam" id="PF00692">
    <property type="entry name" value="dUTPase"/>
    <property type="match status" value="1"/>
</dbReference>
<dbReference type="SUPFAM" id="SSF51283">
    <property type="entry name" value="dUTPase-like"/>
    <property type="match status" value="1"/>
</dbReference>
<accession>Q8G4E8</accession>
<feature type="chain" id="PRO_0000182830" description="Deoxyuridine 5'-triphosphate nucleotidohydrolase">
    <location>
        <begin position="1"/>
        <end position="158"/>
    </location>
</feature>
<feature type="binding site" evidence="1">
    <location>
        <begin position="75"/>
        <end position="77"/>
    </location>
    <ligand>
        <name>substrate</name>
    </ligand>
</feature>
<feature type="binding site" evidence="1">
    <location>
        <position position="88"/>
    </location>
    <ligand>
        <name>substrate</name>
    </ligand>
</feature>
<feature type="binding site" evidence="1">
    <location>
        <begin position="92"/>
        <end position="94"/>
    </location>
    <ligand>
        <name>substrate</name>
    </ligand>
</feature>
<feature type="binding site" evidence="1">
    <location>
        <position position="102"/>
    </location>
    <ligand>
        <name>substrate</name>
    </ligand>
</feature>